<proteinExistence type="inferred from homology"/>
<name>RL14_BRUSI</name>
<protein>
    <recommendedName>
        <fullName evidence="1">Large ribosomal subunit protein uL14</fullName>
    </recommendedName>
    <alternativeName>
        <fullName evidence="2">50S ribosomal protein L14</fullName>
    </alternativeName>
</protein>
<organism>
    <name type="scientific">Brucella suis (strain ATCC 23445 / NCTC 10510)</name>
    <dbReference type="NCBI Taxonomy" id="470137"/>
    <lineage>
        <taxon>Bacteria</taxon>
        <taxon>Pseudomonadati</taxon>
        <taxon>Pseudomonadota</taxon>
        <taxon>Alphaproteobacteria</taxon>
        <taxon>Hyphomicrobiales</taxon>
        <taxon>Brucellaceae</taxon>
        <taxon>Brucella/Ochrobactrum group</taxon>
        <taxon>Brucella</taxon>
    </lineage>
</organism>
<gene>
    <name evidence="1" type="primary">rplN</name>
    <name type="ordered locus">BSUIS_A1272</name>
</gene>
<evidence type="ECO:0000255" key="1">
    <source>
        <dbReference type="HAMAP-Rule" id="MF_01367"/>
    </source>
</evidence>
<evidence type="ECO:0000305" key="2"/>
<sequence>MIQMQTNLDVADNSGARRVMCIKVLGGSKRRYASVGDIIVVSIKEAIPRGRVKKGDVMKAVVVRTAKDIRRPDGSVIRFDNNAAVLIDNKKEPIGTRIFGPVPRELRAKNHMKIISLAPEVL</sequence>
<feature type="chain" id="PRO_1000087117" description="Large ribosomal subunit protein uL14">
    <location>
        <begin position="1"/>
        <end position="122"/>
    </location>
</feature>
<comment type="function">
    <text evidence="1">Binds to 23S rRNA. Forms part of two intersubunit bridges in the 70S ribosome.</text>
</comment>
<comment type="subunit">
    <text evidence="1">Part of the 50S ribosomal subunit. Forms a cluster with proteins L3 and L19. In the 70S ribosome, L14 and L19 interact and together make contacts with the 16S rRNA in bridges B5 and B8.</text>
</comment>
<comment type="similarity">
    <text evidence="1">Belongs to the universal ribosomal protein uL14 family.</text>
</comment>
<accession>B0CH22</accession>
<keyword id="KW-0687">Ribonucleoprotein</keyword>
<keyword id="KW-0689">Ribosomal protein</keyword>
<keyword id="KW-0694">RNA-binding</keyword>
<keyword id="KW-0699">rRNA-binding</keyword>
<dbReference type="EMBL" id="CP000911">
    <property type="protein sequence ID" value="ABY38323.1"/>
    <property type="molecule type" value="Genomic_DNA"/>
</dbReference>
<dbReference type="RefSeq" id="WP_004683923.1">
    <property type="nucleotide sequence ID" value="NC_010169.1"/>
</dbReference>
<dbReference type="SMR" id="B0CH22"/>
<dbReference type="GeneID" id="97533534"/>
<dbReference type="KEGG" id="bmt:BSUIS_A1272"/>
<dbReference type="HOGENOM" id="CLU_095071_2_1_5"/>
<dbReference type="Proteomes" id="UP000008545">
    <property type="component" value="Chromosome I"/>
</dbReference>
<dbReference type="GO" id="GO:0022625">
    <property type="term" value="C:cytosolic large ribosomal subunit"/>
    <property type="evidence" value="ECO:0007669"/>
    <property type="project" value="TreeGrafter"/>
</dbReference>
<dbReference type="GO" id="GO:0070180">
    <property type="term" value="F:large ribosomal subunit rRNA binding"/>
    <property type="evidence" value="ECO:0007669"/>
    <property type="project" value="TreeGrafter"/>
</dbReference>
<dbReference type="GO" id="GO:0003735">
    <property type="term" value="F:structural constituent of ribosome"/>
    <property type="evidence" value="ECO:0007669"/>
    <property type="project" value="InterPro"/>
</dbReference>
<dbReference type="GO" id="GO:0006412">
    <property type="term" value="P:translation"/>
    <property type="evidence" value="ECO:0007669"/>
    <property type="project" value="UniProtKB-UniRule"/>
</dbReference>
<dbReference type="CDD" id="cd00337">
    <property type="entry name" value="Ribosomal_uL14"/>
    <property type="match status" value="1"/>
</dbReference>
<dbReference type="FunFam" id="2.40.150.20:FF:000001">
    <property type="entry name" value="50S ribosomal protein L14"/>
    <property type="match status" value="1"/>
</dbReference>
<dbReference type="Gene3D" id="2.40.150.20">
    <property type="entry name" value="Ribosomal protein L14"/>
    <property type="match status" value="1"/>
</dbReference>
<dbReference type="HAMAP" id="MF_01367">
    <property type="entry name" value="Ribosomal_uL14"/>
    <property type="match status" value="1"/>
</dbReference>
<dbReference type="InterPro" id="IPR000218">
    <property type="entry name" value="Ribosomal_uL14"/>
</dbReference>
<dbReference type="InterPro" id="IPR005745">
    <property type="entry name" value="Ribosomal_uL14_bac-type"/>
</dbReference>
<dbReference type="InterPro" id="IPR019972">
    <property type="entry name" value="Ribosomal_uL14_CS"/>
</dbReference>
<dbReference type="InterPro" id="IPR036853">
    <property type="entry name" value="Ribosomal_uL14_sf"/>
</dbReference>
<dbReference type="NCBIfam" id="TIGR01067">
    <property type="entry name" value="rplN_bact"/>
    <property type="match status" value="1"/>
</dbReference>
<dbReference type="PANTHER" id="PTHR11761">
    <property type="entry name" value="50S/60S RIBOSOMAL PROTEIN L14/L23"/>
    <property type="match status" value="1"/>
</dbReference>
<dbReference type="PANTHER" id="PTHR11761:SF3">
    <property type="entry name" value="LARGE RIBOSOMAL SUBUNIT PROTEIN UL14M"/>
    <property type="match status" value="1"/>
</dbReference>
<dbReference type="Pfam" id="PF00238">
    <property type="entry name" value="Ribosomal_L14"/>
    <property type="match status" value="1"/>
</dbReference>
<dbReference type="SMART" id="SM01374">
    <property type="entry name" value="Ribosomal_L14"/>
    <property type="match status" value="1"/>
</dbReference>
<dbReference type="SUPFAM" id="SSF50193">
    <property type="entry name" value="Ribosomal protein L14"/>
    <property type="match status" value="1"/>
</dbReference>
<dbReference type="PROSITE" id="PS00049">
    <property type="entry name" value="RIBOSOMAL_L14"/>
    <property type="match status" value="1"/>
</dbReference>
<reference key="1">
    <citation type="submission" date="2007-12" db="EMBL/GenBank/DDBJ databases">
        <title>Brucella suis ATCC 23445 whole genome shotgun sequencing project.</title>
        <authorList>
            <person name="Setubal J.C."/>
            <person name="Bowns C."/>
            <person name="Boyle S."/>
            <person name="Crasta O.R."/>
            <person name="Czar M.J."/>
            <person name="Dharmanolla C."/>
            <person name="Gillespie J.J."/>
            <person name="Kenyon R.W."/>
            <person name="Lu J."/>
            <person name="Mane S."/>
            <person name="Mohapatra S."/>
            <person name="Nagrani S."/>
            <person name="Purkayastha A."/>
            <person name="Rajasimha H.K."/>
            <person name="Shallom J.M."/>
            <person name="Shallom S."/>
            <person name="Shukla M."/>
            <person name="Snyder E.E."/>
            <person name="Sobral B.W."/>
            <person name="Wattam A.R."/>
            <person name="Will R."/>
            <person name="Williams K."/>
            <person name="Yoo H."/>
            <person name="Bruce D."/>
            <person name="Detter C."/>
            <person name="Munk C."/>
            <person name="Brettin T.S."/>
        </authorList>
    </citation>
    <scope>NUCLEOTIDE SEQUENCE [LARGE SCALE GENOMIC DNA]</scope>
    <source>
        <strain>ATCC 23445 / NCTC 10510</strain>
    </source>
</reference>